<reference key="1">
    <citation type="journal article" date="2005" name="PLoS Biol.">
        <title>Major structural differences and novel potential virulence mechanisms from the genomes of multiple Campylobacter species.</title>
        <authorList>
            <person name="Fouts D.E."/>
            <person name="Mongodin E.F."/>
            <person name="Mandrell R.E."/>
            <person name="Miller W.G."/>
            <person name="Rasko D.A."/>
            <person name="Ravel J."/>
            <person name="Brinkac L.M."/>
            <person name="DeBoy R.T."/>
            <person name="Parker C.T."/>
            <person name="Daugherty S.C."/>
            <person name="Dodson R.J."/>
            <person name="Durkin A.S."/>
            <person name="Madupu R."/>
            <person name="Sullivan S.A."/>
            <person name="Shetty J.U."/>
            <person name="Ayodeji M.A."/>
            <person name="Shvartsbeyn A."/>
            <person name="Schatz M.C."/>
            <person name="Badger J.H."/>
            <person name="Fraser C.M."/>
            <person name="Nelson K.E."/>
        </authorList>
    </citation>
    <scope>NUCLEOTIDE SEQUENCE [LARGE SCALE GENOMIC DNA]</scope>
    <source>
        <strain>RM1221</strain>
    </source>
</reference>
<organism>
    <name type="scientific">Campylobacter jejuni (strain RM1221)</name>
    <dbReference type="NCBI Taxonomy" id="195099"/>
    <lineage>
        <taxon>Bacteria</taxon>
        <taxon>Pseudomonadati</taxon>
        <taxon>Campylobacterota</taxon>
        <taxon>Epsilonproteobacteria</taxon>
        <taxon>Campylobacterales</taxon>
        <taxon>Campylobacteraceae</taxon>
        <taxon>Campylobacter</taxon>
    </lineage>
</organism>
<keyword id="KW-0131">Cell cycle</keyword>
<keyword id="KW-0132">Cell division</keyword>
<keyword id="KW-0133">Cell shape</keyword>
<keyword id="KW-0961">Cell wall biogenesis/degradation</keyword>
<keyword id="KW-0963">Cytoplasm</keyword>
<keyword id="KW-0274">FAD</keyword>
<keyword id="KW-0285">Flavoprotein</keyword>
<keyword id="KW-0521">NADP</keyword>
<keyword id="KW-0560">Oxidoreductase</keyword>
<keyword id="KW-0573">Peptidoglycan synthesis</keyword>
<proteinExistence type="inferred from homology"/>
<comment type="function">
    <text evidence="1">Cell wall formation.</text>
</comment>
<comment type="catalytic activity">
    <reaction evidence="1">
        <text>UDP-N-acetyl-alpha-D-muramate + NADP(+) = UDP-N-acetyl-3-O-(1-carboxyvinyl)-alpha-D-glucosamine + NADPH + H(+)</text>
        <dbReference type="Rhea" id="RHEA:12248"/>
        <dbReference type="ChEBI" id="CHEBI:15378"/>
        <dbReference type="ChEBI" id="CHEBI:57783"/>
        <dbReference type="ChEBI" id="CHEBI:58349"/>
        <dbReference type="ChEBI" id="CHEBI:68483"/>
        <dbReference type="ChEBI" id="CHEBI:70757"/>
        <dbReference type="EC" id="1.3.1.98"/>
    </reaction>
</comment>
<comment type="cofactor">
    <cofactor evidence="1">
        <name>FAD</name>
        <dbReference type="ChEBI" id="CHEBI:57692"/>
    </cofactor>
</comment>
<comment type="pathway">
    <text evidence="1">Cell wall biogenesis; peptidoglycan biosynthesis.</text>
</comment>
<comment type="subcellular location">
    <subcellularLocation>
        <location evidence="1">Cytoplasm</location>
    </subcellularLocation>
</comment>
<comment type="similarity">
    <text evidence="1">Belongs to the MurB family.</text>
</comment>
<gene>
    <name evidence="1" type="primary">murB</name>
    <name type="ordered locus">CJE1848</name>
</gene>
<feature type="chain" id="PRO_0000179191" description="UDP-N-acetylenolpyruvoylglucosamine reductase">
    <location>
        <begin position="1"/>
        <end position="258"/>
    </location>
</feature>
<feature type="active site" evidence="1">
    <location>
        <position position="142"/>
    </location>
</feature>
<feature type="active site" description="Proton donor" evidence="1">
    <location>
        <position position="184"/>
    </location>
</feature>
<feature type="active site" evidence="1">
    <location>
        <position position="254"/>
    </location>
</feature>
<protein>
    <recommendedName>
        <fullName evidence="1">UDP-N-acetylenolpyruvoylglucosamine reductase</fullName>
        <ecNumber evidence="1">1.3.1.98</ecNumber>
    </recommendedName>
    <alternativeName>
        <fullName evidence="1">UDP-N-acetylmuramate dehydrogenase</fullName>
    </alternativeName>
</protein>
<evidence type="ECO:0000255" key="1">
    <source>
        <dbReference type="HAMAP-Rule" id="MF_00037"/>
    </source>
</evidence>
<name>MURB_CAMJR</name>
<dbReference type="EC" id="1.3.1.98" evidence="1"/>
<dbReference type="EMBL" id="CP000025">
    <property type="protein sequence ID" value="AAW36270.1"/>
    <property type="molecule type" value="Genomic_DNA"/>
</dbReference>
<dbReference type="RefSeq" id="WP_002867526.1">
    <property type="nucleotide sequence ID" value="NC_003912.7"/>
</dbReference>
<dbReference type="SMR" id="Q5HSB7"/>
<dbReference type="KEGG" id="cjr:CJE1848"/>
<dbReference type="HOGENOM" id="CLU_035304_1_2_7"/>
<dbReference type="UniPathway" id="UPA00219"/>
<dbReference type="GO" id="GO:0005829">
    <property type="term" value="C:cytosol"/>
    <property type="evidence" value="ECO:0007669"/>
    <property type="project" value="TreeGrafter"/>
</dbReference>
<dbReference type="GO" id="GO:0050660">
    <property type="term" value="F:flavin adenine dinucleotide binding"/>
    <property type="evidence" value="ECO:0007669"/>
    <property type="project" value="InterPro"/>
</dbReference>
<dbReference type="GO" id="GO:0008762">
    <property type="term" value="F:UDP-N-acetylmuramate dehydrogenase activity"/>
    <property type="evidence" value="ECO:0007669"/>
    <property type="project" value="UniProtKB-UniRule"/>
</dbReference>
<dbReference type="GO" id="GO:0051301">
    <property type="term" value="P:cell division"/>
    <property type="evidence" value="ECO:0007669"/>
    <property type="project" value="UniProtKB-KW"/>
</dbReference>
<dbReference type="GO" id="GO:0071555">
    <property type="term" value="P:cell wall organization"/>
    <property type="evidence" value="ECO:0007669"/>
    <property type="project" value="UniProtKB-KW"/>
</dbReference>
<dbReference type="GO" id="GO:0009252">
    <property type="term" value="P:peptidoglycan biosynthetic process"/>
    <property type="evidence" value="ECO:0007669"/>
    <property type="project" value="UniProtKB-UniRule"/>
</dbReference>
<dbReference type="GO" id="GO:0008360">
    <property type="term" value="P:regulation of cell shape"/>
    <property type="evidence" value="ECO:0007669"/>
    <property type="project" value="UniProtKB-KW"/>
</dbReference>
<dbReference type="Gene3D" id="3.30.465.10">
    <property type="match status" value="1"/>
</dbReference>
<dbReference type="Gene3D" id="3.90.78.10">
    <property type="entry name" value="UDP-N-acetylenolpyruvoylglucosamine reductase, C-terminal domain"/>
    <property type="match status" value="1"/>
</dbReference>
<dbReference type="HAMAP" id="MF_00037">
    <property type="entry name" value="MurB"/>
    <property type="match status" value="1"/>
</dbReference>
<dbReference type="InterPro" id="IPR036318">
    <property type="entry name" value="FAD-bd_PCMH-like_sf"/>
</dbReference>
<dbReference type="InterPro" id="IPR016169">
    <property type="entry name" value="FAD-bd_PCMH_sub2"/>
</dbReference>
<dbReference type="InterPro" id="IPR003170">
    <property type="entry name" value="MurB"/>
</dbReference>
<dbReference type="InterPro" id="IPR011601">
    <property type="entry name" value="MurB_C"/>
</dbReference>
<dbReference type="InterPro" id="IPR036635">
    <property type="entry name" value="MurB_C_sf"/>
</dbReference>
<dbReference type="NCBIfam" id="TIGR00179">
    <property type="entry name" value="murB"/>
    <property type="match status" value="1"/>
</dbReference>
<dbReference type="NCBIfam" id="NF010479">
    <property type="entry name" value="PRK13904.1"/>
    <property type="match status" value="1"/>
</dbReference>
<dbReference type="PANTHER" id="PTHR21071">
    <property type="entry name" value="UDP-N-ACETYLENOLPYRUVOYLGLUCOSAMINE REDUCTASE"/>
    <property type="match status" value="1"/>
</dbReference>
<dbReference type="PANTHER" id="PTHR21071:SF4">
    <property type="entry name" value="UDP-N-ACETYLENOLPYRUVOYLGLUCOSAMINE REDUCTASE"/>
    <property type="match status" value="1"/>
</dbReference>
<dbReference type="Pfam" id="PF02873">
    <property type="entry name" value="MurB_C"/>
    <property type="match status" value="1"/>
</dbReference>
<dbReference type="SUPFAM" id="SSF56176">
    <property type="entry name" value="FAD-binding/transporter-associated domain-like"/>
    <property type="match status" value="1"/>
</dbReference>
<dbReference type="SUPFAM" id="SSF56194">
    <property type="entry name" value="Uridine diphospho-N-Acetylenolpyruvylglucosamine reductase, MurB, C-terminal domain"/>
    <property type="match status" value="1"/>
</dbReference>
<sequence>MIIDFKKYSSVRIGNEFEVLVLDQICDFDGFLIGGANNLLISPKPKNIGILGDGFDFMQILDQNKDFIHLRIGCKTKSSKIYRFAKENNLKGFEYLSKIPGTLGGLLKMNAGLKGECISQNLIKIATSQGEILRENINFDYRFCPLNMPFFWAEFKLNFGFDTLKDEALKNARSNQPSGASFGSIFKNPKNDFAGRLIEAVGLKGFSKGDAMLSDKHANFLINKKNASFEDAFFLIELARKKVFEEFGINLENEVIII</sequence>
<accession>Q5HSB7</accession>